<sequence length="3582" mass="408214">MCENCADLVEVLNEISDIEGGDGLQLRKEHTLKIFAYINSWTQRQCLCCFKEYKHLEIFNQVVCALINLVIAQVQVLRDQLCKHCTTINIDSTWQDESNQAEEPLSIDRECNEGNTERQKSIEKKSNSTRTCNLTEEESSKSSDPFSLWNTDEKEKLLLCVAKIFQIQFPLYTAYKHNTHPTIEDISTQESNILGAFCDMNDVEVPLHLLRYVCLFCGKNGLSLMKDCFEYGTPETLPFLIAHAFITVVSNIRIWLHIPAVMQHIIPFRTYVIRYLCKLSDQELRQSAARNMADLMWSTVKEPLDTTLCFDKESLDLAFKYFMSPTLTMRLAGLSQITNQLHTFNDVCNNESLVSDTETSIAKELADWLISNNVVEHIFGPNLHIEIIKQCQVILNFLAAEGRLSTQHIDCIWAAAQLKHCSRYIHDLFPSLIKNLDPVPLRHLLNLVSALEPGVHTEQTLYLASMLIKALWNNALAAKAQLSKQSSFASLLNTNMPIGNKKEEEELRRAAPSPWSPAASPQSSDNSDTHQSGASDIEMDEQLINRNKHVQQRLSDTEESMQGSSDETANSGEDGSSGPGSSSGHSDGSSNEVNSSHASQSAGSPGSEVQSEDIADIEALKEEEEEEEEEEEEEEEEDDEEEEDEEEDDDDDDDHGHNPAKNTCGTELRNRKLENPAGICLGESQGTSERNGTNSGTGKDLVFNTEPLPSVDNRIRMLDACAHSEDPEHGISGEVSSAHLAQGSQEACITRSGDFLGETIGNELFNCRQFIGPQHHHHHHHHHHHHHHHHHHHHHHHDGHMVDDMLSADDVSCSSSQVSAKSEKNMADFDGEESGCEEELVQINSHAELTSHLQQHLPNLASIYHEHLSQGPAVHKHQFSSNAVTDINLDNVCKKGNTLLWDIVQDDDAINLSEGLINEAEKLLCSLVCWFTDRQIRMRFIEGCLENLGNNRSVVISLRLLPKLFGTFQQFGSSYDTHWITMWAEKELNMMKLFFDNLVYYIQGIREGRQKHALYSHSAEVQVRLQFLTCVFSTLGSPDHFRLSLEQVDILWHCLVEDSECYDDALHWFLNQVRSKDQHAMGMETYKHLFLEKMPQLKPETISMTGLNLFQHLCNLARLATSAYDGGSNSELCGMDQFWGIALRAQSGDVSRAAIQYINSYYINGKTGLEKEQEFISKCMESLMIASSSLEQESHSSLTVIERGLLMLKTHLEAFRRRFAYHLRQWQIEGTGISSHLKALSDKQSLPLRVVCQPAGLPDKMTIEMYPSDQVADLRAEVTHWYENLQKEQINQQAQLQEFGQSSRKGEFPGGLMGPVRMISSGHELTTDYDEKALHELGFKDMQMVFVSLGAPRRERKGEGVQLPASCLPPPQKDNIPMLLLLQEPHLTTLFDLLEMLASFKPPSGKVAVDDSESLKCEELHLHAENLSRRVWELLMLLPTCPNMLTAFQNVSDEQSNDGLNWKELLKIKSAHKLLYALEIIEALGKPNRRIRRESTGSYSDLYPDSDDSSEDQVENSKNSWTCKFVAAGGLQQLLEIFNSAILEPKEQESWTVWQLDCLACLLKLICQFAVDPSDLDLAYHDVFAWSGIAESHRKRTWPGKSRKAAGDHAKSLHIPRLTEVFLVLVQGTSLIQRLMSVAYTYDNLAPRVLKAQSDHRSRHEVSHYSMWLLVSWAHCCSLVKSSLADSDHLQDWLKQLTLLIPETAVRHESCNGLYKLSLSGLDGGDSIHRSFLLLAASTLLKFLPDAQALKPPRIDDYEEEPLLKPGCKEYFWLLCKLVDNIHIKDASQTTLLDLDALARHLADCIRSREILDHLDGSIEDDGLSGLLRLATSVIKHKPPFKFSREGQEFLRDIFNLLFLLPSLKDRRQPKCKSHSCRAAAYDLLVEMVKGSVENYRLIHNWVMAQHMQSHAPYKWDYWPHEDVRAECRFVGLTNLGATCYLASTIQQLYMIPEARQAVFTAKYSEDMKHKTTLLELQKMFTYLMESECKAYNPRPFCKTYTMDKQPLNTGEQKDMTEFFTDLITKVEEMSPELKNTVKSLFGGVITNNVVSLDCEHVSQTAEEFYTVRCQVADMKNIYESLDEVTIKDTLEGDNMYTCSHCGKKVRAEKRACFKKLPRILSFNTMRYTFNMVTMMKEKVNTHFSFPLRLDMTPYTEDFLMGKSDRKEGFKDVGDRSKDTESYEYDLIGVTVHTGTADGGHYYSFIRDIVNPHAYKNNKWYLFNDAEVKPFDSAQLASECFGGEMTTKTYDSVTDKFMDFSFEKTHSAYMLFYKRMEPEEENGREYKFDVSSELLEWIWHDNMQFLQDKNIFEHTYFGFMWQLCSCIPSTLPDPKAVSLMTAKLSTSFVLETFIHSKEKPTMLQWIELLTKQFNNSQAACEWFLDRMADDDWWPMQILIKCPNQIVRQMFQRLCIHVIQRLRPVHAHLYLQPGMEDGSDDMDASVEDIGGRSCVTRFVRTLLLIMEHGVKPHSKHLTEYFAFLYEFAKMGEEESQFLLSLQAISTMVHFYMGTKGPENPQVEVLSEEEGEEEEEEEDILSLAEEKYRPAALEKMIALVALLVEQSRSERHLTLSQTDMAALTGGKGFPFLFQHIRDGINIRQTCNLIFSLCRYNNRLAEHIVSMLFTSIAKLTPEAANPFFKLLTMLMEFAGGPPGMPPFASYILQRIWEVIEYNPSQCLDWLAVQTPRNKLAHSWVLQNMENWVERFLLAHNYPRVRTSAAYLLVSLIPSNSFRQMFRSTRSLHIPTRDLPLSPDTTVVLHQVYNVLLGLLSRAKLYVDAAVHGTTKLVPYLSFMTYCLISKTEKLMFSTYFMDLWNLFQPKLSEPAIATNHNKQALLSFWYNVCADCPENIRLIVQNPVVTKNIAFNYILADHDDQDVVLFNRGMLPAYYGILRLCCEQSPAFTRQLASHQNIQWAFKNLTPHASQYPGAVEELFNLMQLFIAQRPDMREEELEDIKQFKKTTISCYLRCLDGRSCWTTLISAFRILLESDEDRLLVVFNRGLILMTESFNTLHMMYHEATACHVTGDLVELLSIFLSVLKSTRPYLQRKDVKQALIQWQERIEFAHKLLTLLNSYSPPELRNACIDVLKELVLLSPHDFLHTLVPFLQHNHCTYHHSNIPMSLGPYFPCRENIKLIGGKSNIRPPRPELNMCLLPTMVETSKGKDDVYDRMLLDYFFSYHQFIHLLCRVAINCEKFTETLVKLSVLVAYEGLPLHLALFPKLWTELCQTQSAMSKNCIKLLCEDPVFAEYIKCILMDERTFLNNNIVYTFMTHFLLKVQSQVFSEANCASLISTLITNLINQYQNLQSDFTNRVEISKASAALNGDLRALALLLSVHTPKQLNPALIPTLQELLNKCRTCLQQRNSLQEQEAKERKTKDDEGATPVKRRRVSSDEEHTVDSCIGDIKTETREVLTPTSTSDNETRDSSIIDPGTEQDLPSPENSSVKEYRMEGPSSFSEDGSHIRSQHAEEQSNNGRFDDCKEFKDHCSKDTTLAEDESEFPSTSISAVLSDLADLRSCDGQALSSQDPEAAVSLSCGHSRGLISHMQQHDILDTLCRTIESTIHVVTRISGKGNQAAS</sequence>
<organism>
    <name type="scientific">Mus musculus</name>
    <name type="common">Mouse</name>
    <dbReference type="NCBI Taxonomy" id="10090"/>
    <lineage>
        <taxon>Eukaryota</taxon>
        <taxon>Metazoa</taxon>
        <taxon>Chordata</taxon>
        <taxon>Craniata</taxon>
        <taxon>Vertebrata</taxon>
        <taxon>Euteleostomi</taxon>
        <taxon>Mammalia</taxon>
        <taxon>Eutheria</taxon>
        <taxon>Euarchontoglires</taxon>
        <taxon>Glires</taxon>
        <taxon>Rodentia</taxon>
        <taxon>Myomorpha</taxon>
        <taxon>Muroidea</taxon>
        <taxon>Muridae</taxon>
        <taxon>Murinae</taxon>
        <taxon>Mus</taxon>
        <taxon>Mus</taxon>
    </lineage>
</organism>
<reference key="1">
    <citation type="journal article" date="2009" name="PLoS Biol.">
        <title>Lineage-specific biology revealed by a finished genome assembly of the mouse.</title>
        <authorList>
            <person name="Church D.M."/>
            <person name="Goodstadt L."/>
            <person name="Hillier L.W."/>
            <person name="Zody M.C."/>
            <person name="Goldstein S."/>
            <person name="She X."/>
            <person name="Bult C.J."/>
            <person name="Agarwala R."/>
            <person name="Cherry J.L."/>
            <person name="DiCuccio M."/>
            <person name="Hlavina W."/>
            <person name="Kapustin Y."/>
            <person name="Meric P."/>
            <person name="Maglott D."/>
            <person name="Birtle Z."/>
            <person name="Marques A.C."/>
            <person name="Graves T."/>
            <person name="Zhou S."/>
            <person name="Teague B."/>
            <person name="Potamousis K."/>
            <person name="Churas C."/>
            <person name="Place M."/>
            <person name="Herschleb J."/>
            <person name="Runnheim R."/>
            <person name="Forrest D."/>
            <person name="Amos-Landgraf J."/>
            <person name="Schwartz D.C."/>
            <person name="Cheng Z."/>
            <person name="Lindblad-Toh K."/>
            <person name="Eichler E.E."/>
            <person name="Ponting C.P."/>
        </authorList>
    </citation>
    <scope>NUCLEOTIDE SEQUENCE [LARGE SCALE GENOMIC DNA]</scope>
    <source>
        <strain>C57BL/6J</strain>
    </source>
</reference>
<reference key="2">
    <citation type="journal article" date="2005" name="Science">
        <title>The transcriptional landscape of the mammalian genome.</title>
        <authorList>
            <person name="Carninci P."/>
            <person name="Kasukawa T."/>
            <person name="Katayama S."/>
            <person name="Gough J."/>
            <person name="Frith M.C."/>
            <person name="Maeda N."/>
            <person name="Oyama R."/>
            <person name="Ravasi T."/>
            <person name="Lenhard B."/>
            <person name="Wells C."/>
            <person name="Kodzius R."/>
            <person name="Shimokawa K."/>
            <person name="Bajic V.B."/>
            <person name="Brenner S.E."/>
            <person name="Batalov S."/>
            <person name="Forrest A.R."/>
            <person name="Zavolan M."/>
            <person name="Davis M.J."/>
            <person name="Wilming L.G."/>
            <person name="Aidinis V."/>
            <person name="Allen J.E."/>
            <person name="Ambesi-Impiombato A."/>
            <person name="Apweiler R."/>
            <person name="Aturaliya R.N."/>
            <person name="Bailey T.L."/>
            <person name="Bansal M."/>
            <person name="Baxter L."/>
            <person name="Beisel K.W."/>
            <person name="Bersano T."/>
            <person name="Bono H."/>
            <person name="Chalk A.M."/>
            <person name="Chiu K.P."/>
            <person name="Choudhary V."/>
            <person name="Christoffels A."/>
            <person name="Clutterbuck D.R."/>
            <person name="Crowe M.L."/>
            <person name="Dalla E."/>
            <person name="Dalrymple B.P."/>
            <person name="de Bono B."/>
            <person name="Della Gatta G."/>
            <person name="di Bernardo D."/>
            <person name="Down T."/>
            <person name="Engstrom P."/>
            <person name="Fagiolini M."/>
            <person name="Faulkner G."/>
            <person name="Fletcher C.F."/>
            <person name="Fukushima T."/>
            <person name="Furuno M."/>
            <person name="Futaki S."/>
            <person name="Gariboldi M."/>
            <person name="Georgii-Hemming P."/>
            <person name="Gingeras T.R."/>
            <person name="Gojobori T."/>
            <person name="Green R.E."/>
            <person name="Gustincich S."/>
            <person name="Harbers M."/>
            <person name="Hayashi Y."/>
            <person name="Hensch T.K."/>
            <person name="Hirokawa N."/>
            <person name="Hill D."/>
            <person name="Huminiecki L."/>
            <person name="Iacono M."/>
            <person name="Ikeo K."/>
            <person name="Iwama A."/>
            <person name="Ishikawa T."/>
            <person name="Jakt M."/>
            <person name="Kanapin A."/>
            <person name="Katoh M."/>
            <person name="Kawasawa Y."/>
            <person name="Kelso J."/>
            <person name="Kitamura H."/>
            <person name="Kitano H."/>
            <person name="Kollias G."/>
            <person name="Krishnan S.P."/>
            <person name="Kruger A."/>
            <person name="Kummerfeld S.K."/>
            <person name="Kurochkin I.V."/>
            <person name="Lareau L.F."/>
            <person name="Lazarevic D."/>
            <person name="Lipovich L."/>
            <person name="Liu J."/>
            <person name="Liuni S."/>
            <person name="McWilliam S."/>
            <person name="Madan Babu M."/>
            <person name="Madera M."/>
            <person name="Marchionni L."/>
            <person name="Matsuda H."/>
            <person name="Matsuzawa S."/>
            <person name="Miki H."/>
            <person name="Mignone F."/>
            <person name="Miyake S."/>
            <person name="Morris K."/>
            <person name="Mottagui-Tabar S."/>
            <person name="Mulder N."/>
            <person name="Nakano N."/>
            <person name="Nakauchi H."/>
            <person name="Ng P."/>
            <person name="Nilsson R."/>
            <person name="Nishiguchi S."/>
            <person name="Nishikawa S."/>
            <person name="Nori F."/>
            <person name="Ohara O."/>
            <person name="Okazaki Y."/>
            <person name="Orlando V."/>
            <person name="Pang K.C."/>
            <person name="Pavan W.J."/>
            <person name="Pavesi G."/>
            <person name="Pesole G."/>
            <person name="Petrovsky N."/>
            <person name="Piazza S."/>
            <person name="Reed J."/>
            <person name="Reid J.F."/>
            <person name="Ring B.Z."/>
            <person name="Ringwald M."/>
            <person name="Rost B."/>
            <person name="Ruan Y."/>
            <person name="Salzberg S.L."/>
            <person name="Sandelin A."/>
            <person name="Schneider C."/>
            <person name="Schoenbach C."/>
            <person name="Sekiguchi K."/>
            <person name="Semple C.A."/>
            <person name="Seno S."/>
            <person name="Sessa L."/>
            <person name="Sheng Y."/>
            <person name="Shibata Y."/>
            <person name="Shimada H."/>
            <person name="Shimada K."/>
            <person name="Silva D."/>
            <person name="Sinclair B."/>
            <person name="Sperling S."/>
            <person name="Stupka E."/>
            <person name="Sugiura K."/>
            <person name="Sultana R."/>
            <person name="Takenaka Y."/>
            <person name="Taki K."/>
            <person name="Tammoja K."/>
            <person name="Tan S.L."/>
            <person name="Tang S."/>
            <person name="Taylor M.S."/>
            <person name="Tegner J."/>
            <person name="Teichmann S.A."/>
            <person name="Ueda H.R."/>
            <person name="van Nimwegen E."/>
            <person name="Verardo R."/>
            <person name="Wei C.L."/>
            <person name="Yagi K."/>
            <person name="Yamanishi H."/>
            <person name="Zabarovsky E."/>
            <person name="Zhu S."/>
            <person name="Zimmer A."/>
            <person name="Hide W."/>
            <person name="Bult C."/>
            <person name="Grimmond S.M."/>
            <person name="Teasdale R.D."/>
            <person name="Liu E.T."/>
            <person name="Brusic V."/>
            <person name="Quackenbush J."/>
            <person name="Wahlestedt C."/>
            <person name="Mattick J.S."/>
            <person name="Hume D.A."/>
            <person name="Kai C."/>
            <person name="Sasaki D."/>
            <person name="Tomaru Y."/>
            <person name="Fukuda S."/>
            <person name="Kanamori-Katayama M."/>
            <person name="Suzuki M."/>
            <person name="Aoki J."/>
            <person name="Arakawa T."/>
            <person name="Iida J."/>
            <person name="Imamura K."/>
            <person name="Itoh M."/>
            <person name="Kato T."/>
            <person name="Kawaji H."/>
            <person name="Kawagashira N."/>
            <person name="Kawashima T."/>
            <person name="Kojima M."/>
            <person name="Kondo S."/>
            <person name="Konno H."/>
            <person name="Nakano K."/>
            <person name="Ninomiya N."/>
            <person name="Nishio T."/>
            <person name="Okada M."/>
            <person name="Plessy C."/>
            <person name="Shibata K."/>
            <person name="Shiraki T."/>
            <person name="Suzuki S."/>
            <person name="Tagami M."/>
            <person name="Waki K."/>
            <person name="Watahiki A."/>
            <person name="Okamura-Oho Y."/>
            <person name="Suzuki H."/>
            <person name="Kawai J."/>
            <person name="Hayashizaki Y."/>
        </authorList>
    </citation>
    <scope>NUCLEOTIDE SEQUENCE [LARGE SCALE MRNA] OF 225-639; 2096-2278 AND 2437-3582 (ISOFORM 4)</scope>
    <source>
        <strain>C57BL/6J</strain>
        <tissue>Ovary</tissue>
        <tissue>Sympathetic ganglion</tissue>
        <tissue>Testis</tissue>
    </source>
</reference>
<reference key="3">
    <citation type="journal article" date="2003" name="DNA Res.">
        <title>Prediction of the coding sequences of mouse homologues of KIAA gene: III. The complete nucleotide sequences of 500 mouse KIAA-homologous cDNAs identified by screening of terminal sequences of cDNA clones randomly sampled from size-fractionated libraries.</title>
        <authorList>
            <person name="Okazaki N."/>
            <person name="Kikuno R."/>
            <person name="Ohara R."/>
            <person name="Inamoto S."/>
            <person name="Koseki H."/>
            <person name="Hiraoka S."/>
            <person name="Saga Y."/>
            <person name="Nagase T."/>
            <person name="Ohara O."/>
            <person name="Koga H."/>
        </authorList>
    </citation>
    <scope>NUCLEOTIDE SEQUENCE [LARGE SCALE MRNA] OF 2279-3582 (ISOFORM 3)</scope>
    <source>
        <tissue>Embryonic tail</tissue>
    </source>
</reference>
<reference key="4">
    <citation type="journal article" date="2004" name="Genome Res.">
        <title>The status, quality, and expansion of the NIH full-length cDNA project: the Mammalian Gene Collection (MGC).</title>
        <authorList>
            <consortium name="The MGC Project Team"/>
        </authorList>
    </citation>
    <scope>NUCLEOTIDE SEQUENCE [LARGE SCALE MRNA] OF 2346-2569 AND 3160-3376</scope>
    <source>
        <strain>C57BL/6J</strain>
        <strain>Czech II</strain>
        <tissue>Brain</tissue>
        <tissue>Mammary tumor</tissue>
    </source>
</reference>
<reference key="5">
    <citation type="journal article" date="1997" name="Mol. Cell. Biol.">
        <title>Mouse U2af1-rs1 is a neomorphic imprinted gene.</title>
        <authorList>
            <person name="Nabetani A."/>
            <person name="Hatada I."/>
            <person name="Morisaki H."/>
            <person name="Oshimura M."/>
            <person name="Mukai T."/>
        </authorList>
    </citation>
    <scope>IDENTIFICATION</scope>
</reference>
<reference key="6">
    <citation type="journal article" date="2004" name="Mol. Cell. Proteomics">
        <title>Phosphoproteomic analysis of the developing mouse brain.</title>
        <authorList>
            <person name="Ballif B.A."/>
            <person name="Villen J."/>
            <person name="Beausoleil S.A."/>
            <person name="Schwartz D."/>
            <person name="Gygi S.P."/>
        </authorList>
    </citation>
    <scope>PHOSPHORYLATION [LARGE SCALE ANALYSIS] AT SER-2525</scope>
    <scope>IDENTIFICATION BY MASS SPECTROMETRY [LARGE SCALE ANALYSIS]</scope>
    <source>
        <tissue>Embryonic brain</tissue>
    </source>
</reference>
<reference key="7">
    <citation type="journal article" date="2010" name="Cell">
        <title>A tissue-specific atlas of mouse protein phosphorylation and expression.</title>
        <authorList>
            <person name="Huttlin E.L."/>
            <person name="Jedrychowski M.P."/>
            <person name="Elias J.E."/>
            <person name="Goswami T."/>
            <person name="Rad R."/>
            <person name="Beausoleil S.A."/>
            <person name="Villen J."/>
            <person name="Haas W."/>
            <person name="Sowa M.E."/>
            <person name="Gygi S.P."/>
        </authorList>
    </citation>
    <scope>PHOSPHORYLATION [LARGE SCALE ANALYSIS] AT SER-486; SER-487; SER-490; SER-1506; SER-2525; SER-3395; SER-3396; THR-3418 AND SER-3443</scope>
    <scope>IDENTIFICATION BY MASS SPECTROMETRY [LARGE SCALE ANALYSIS]</scope>
    <source>
        <tissue>Brain</tissue>
        <tissue>Heart</tissue>
        <tissue>Kidney</tissue>
        <tissue>Liver</tissue>
        <tissue>Lung</tissue>
        <tissue>Spleen</tissue>
        <tissue>Testis</tissue>
    </source>
</reference>
<gene>
    <name type="primary">Usp34</name>
    <name type="synonym">Kiaa0570</name>
    <name type="synonym">Murr2</name>
</gene>
<keyword id="KW-0025">Alternative splicing</keyword>
<keyword id="KW-0378">Hydrolase</keyword>
<keyword id="KW-0597">Phosphoprotein</keyword>
<keyword id="KW-0645">Protease</keyword>
<keyword id="KW-1185">Reference proteome</keyword>
<keyword id="KW-0788">Thiol protease</keyword>
<keyword id="KW-0833">Ubl conjugation pathway</keyword>
<keyword id="KW-0879">Wnt signaling pathway</keyword>
<accession>Q6ZQ93</accession>
<accession>A2AF26</accession>
<accession>A2AF27</accession>
<accession>A2AF77</accession>
<accession>Q3UF93</accession>
<accession>Q3UPN0</accession>
<accession>Q6P563</accession>
<accession>Q7TMJ6</accession>
<accession>Q8CCH0</accession>
<feature type="chain" id="PRO_0000249520" description="Ubiquitin carboxyl-terminal hydrolase 34">
    <location>
        <begin position="1"/>
        <end position="3582"/>
    </location>
</feature>
<feature type="domain" description="USP">
    <location>
        <begin position="1931"/>
        <end position="2276"/>
    </location>
</feature>
<feature type="region of interest" description="Disordered" evidence="4">
    <location>
        <begin position="503"/>
        <end position="533"/>
    </location>
</feature>
<feature type="region of interest" description="Disordered" evidence="4">
    <location>
        <begin position="551"/>
        <end position="670"/>
    </location>
</feature>
<feature type="region of interest" description="Disordered" evidence="4">
    <location>
        <begin position="682"/>
        <end position="705"/>
    </location>
</feature>
<feature type="region of interest" description="Disordered" evidence="4">
    <location>
        <begin position="775"/>
        <end position="801"/>
    </location>
</feature>
<feature type="region of interest" description="Disordered" evidence="4">
    <location>
        <begin position="1496"/>
        <end position="1515"/>
    </location>
</feature>
<feature type="region of interest" description="Disordered" evidence="4">
    <location>
        <begin position="3369"/>
        <end position="3484"/>
    </location>
</feature>
<feature type="compositionally biased region" description="Low complexity" evidence="4">
    <location>
        <begin position="510"/>
        <end position="524"/>
    </location>
</feature>
<feature type="compositionally biased region" description="Polar residues" evidence="4">
    <location>
        <begin position="560"/>
        <end position="570"/>
    </location>
</feature>
<feature type="compositionally biased region" description="Low complexity" evidence="4">
    <location>
        <begin position="571"/>
        <end position="590"/>
    </location>
</feature>
<feature type="compositionally biased region" description="Polar residues" evidence="4">
    <location>
        <begin position="591"/>
        <end position="609"/>
    </location>
</feature>
<feature type="compositionally biased region" description="Acidic residues" evidence="4">
    <location>
        <begin position="610"/>
        <end position="653"/>
    </location>
</feature>
<feature type="compositionally biased region" description="Polar residues" evidence="4">
    <location>
        <begin position="684"/>
        <end position="697"/>
    </location>
</feature>
<feature type="compositionally biased region" description="Basic residues" evidence="4">
    <location>
        <begin position="775"/>
        <end position="798"/>
    </location>
</feature>
<feature type="compositionally biased region" description="Acidic residues" evidence="4">
    <location>
        <begin position="1504"/>
        <end position="1514"/>
    </location>
</feature>
<feature type="compositionally biased region" description="Basic and acidic residues" evidence="4">
    <location>
        <begin position="3373"/>
        <end position="3384"/>
    </location>
</feature>
<feature type="compositionally biased region" description="Basic and acidic residues" evidence="4">
    <location>
        <begin position="3463"/>
        <end position="3484"/>
    </location>
</feature>
<feature type="active site" description="Nucleophile" evidence="2 3">
    <location>
        <position position="1940"/>
    </location>
</feature>
<feature type="active site" description="Proton acceptor" evidence="2 3">
    <location>
        <position position="2201"/>
    </location>
</feature>
<feature type="modified residue" description="Phosphoserine" evidence="1">
    <location>
        <position position="352"/>
    </location>
</feature>
<feature type="modified residue" description="Phosphoserine" evidence="9">
    <location>
        <position position="486"/>
    </location>
</feature>
<feature type="modified residue" description="Phosphoserine" evidence="9">
    <location>
        <position position="487"/>
    </location>
</feature>
<feature type="modified residue" description="Phosphoserine" evidence="9">
    <location>
        <position position="490"/>
    </location>
</feature>
<feature type="modified residue" description="Phosphoserine" evidence="9">
    <location>
        <position position="1506"/>
    </location>
</feature>
<feature type="modified residue" description="Phosphoserine" evidence="8 9">
    <location>
        <position position="2525"/>
    </location>
</feature>
<feature type="modified residue" description="Phosphoserine" evidence="9">
    <location>
        <position position="3395"/>
    </location>
</feature>
<feature type="modified residue" description="Phosphoserine" evidence="9">
    <location>
        <position position="3396"/>
    </location>
</feature>
<feature type="modified residue" description="Phosphothreonine" evidence="9">
    <location>
        <position position="3418"/>
    </location>
</feature>
<feature type="modified residue" description="Phosphoserine" evidence="1">
    <location>
        <position position="3423"/>
    </location>
</feature>
<feature type="modified residue" description="Phosphoserine" evidence="9">
    <location>
        <position position="3443"/>
    </location>
</feature>
<feature type="modified residue" description="Phosphoserine" evidence="1">
    <location>
        <position position="3539"/>
    </location>
</feature>
<feature type="splice variant" id="VSP_035641" description="In isoform 2, isoform 3 and isoform 4." evidence="5 6">
    <location>
        <begin position="1"/>
        <end position="151"/>
    </location>
</feature>
<feature type="splice variant" id="VSP_035642" description="In isoform 2, isoform 3 and isoform 4." evidence="5 6">
    <original>DEKEKLLLC</original>
    <variation>MRRKNYYYV</variation>
    <location>
        <begin position="152"/>
        <end position="160"/>
    </location>
</feature>
<feature type="splice variant" id="VSP_020464" description="In isoform 4." evidence="6">
    <location>
        <begin position="2569"/>
        <end position="3582"/>
    </location>
</feature>
<feature type="splice variant" id="VSP_020465" description="In isoform 3." evidence="5">
    <location>
        <begin position="3124"/>
        <end position="3206"/>
    </location>
</feature>
<feature type="sequence conflict" description="In Ref. 2; BAE25365." evidence="7" ref="2">
    <original>K</original>
    <variation>Q</variation>
    <location>
        <position position="2163"/>
    </location>
</feature>
<protein>
    <recommendedName>
        <fullName>Ubiquitin carboxyl-terminal hydrolase 34</fullName>
        <ecNumber evidence="1">3.4.19.12</ecNumber>
    </recommendedName>
    <alternativeName>
        <fullName>Deubiquitinating enzyme 34</fullName>
    </alternativeName>
    <alternativeName>
        <fullName>Ubiquitin thioesterase 34</fullName>
    </alternativeName>
    <alternativeName>
        <fullName>Ubiquitin-specific-processing protease 34</fullName>
    </alternativeName>
</protein>
<evidence type="ECO:0000250" key="1">
    <source>
        <dbReference type="UniProtKB" id="Q70CQ2"/>
    </source>
</evidence>
<evidence type="ECO:0000255" key="2">
    <source>
        <dbReference type="PROSITE-ProRule" id="PRU10092"/>
    </source>
</evidence>
<evidence type="ECO:0000255" key="3">
    <source>
        <dbReference type="PROSITE-ProRule" id="PRU10093"/>
    </source>
</evidence>
<evidence type="ECO:0000256" key="4">
    <source>
        <dbReference type="SAM" id="MobiDB-lite"/>
    </source>
</evidence>
<evidence type="ECO:0000303" key="5">
    <source>
    </source>
</evidence>
<evidence type="ECO:0000303" key="6">
    <source>
    </source>
</evidence>
<evidence type="ECO:0000305" key="7"/>
<evidence type="ECO:0007744" key="8">
    <source>
    </source>
</evidence>
<evidence type="ECO:0007744" key="9">
    <source>
    </source>
</evidence>
<dbReference type="EC" id="3.4.19.12" evidence="1"/>
<dbReference type="EMBL" id="AL672049">
    <property type="protein sequence ID" value="CAM16931.1"/>
    <property type="molecule type" value="Genomic_DNA"/>
</dbReference>
<dbReference type="EMBL" id="AL672049">
    <property type="protein sequence ID" value="CAM16940.1"/>
    <property type="molecule type" value="Genomic_DNA"/>
</dbReference>
<dbReference type="EMBL" id="AL672004">
    <property type="protein sequence ID" value="CAM16940.1"/>
    <property type="status" value="JOINED"/>
    <property type="molecule type" value="Genomic_DNA"/>
</dbReference>
<dbReference type="EMBL" id="AL772359">
    <property type="protein sequence ID" value="CAM16940.1"/>
    <property type="status" value="JOINED"/>
    <property type="molecule type" value="Genomic_DNA"/>
</dbReference>
<dbReference type="EMBL" id="AL928722">
    <property type="protein sequence ID" value="CAM16940.1"/>
    <property type="status" value="JOINED"/>
    <property type="molecule type" value="Genomic_DNA"/>
</dbReference>
<dbReference type="EMBL" id="AL672004">
    <property type="protein sequence ID" value="CAM17339.1"/>
    <property type="molecule type" value="Genomic_DNA"/>
</dbReference>
<dbReference type="EMBL" id="AL672004">
    <property type="protein sequence ID" value="CAM17340.1"/>
    <property type="molecule type" value="Genomic_DNA"/>
</dbReference>
<dbReference type="EMBL" id="AL672049">
    <property type="protein sequence ID" value="CAM17340.1"/>
    <property type="status" value="JOINED"/>
    <property type="molecule type" value="Genomic_DNA"/>
</dbReference>
<dbReference type="EMBL" id="AL772359">
    <property type="protein sequence ID" value="CAM17340.1"/>
    <property type="status" value="JOINED"/>
    <property type="molecule type" value="Genomic_DNA"/>
</dbReference>
<dbReference type="EMBL" id="AL928722">
    <property type="protein sequence ID" value="CAM17340.1"/>
    <property type="status" value="JOINED"/>
    <property type="molecule type" value="Genomic_DNA"/>
</dbReference>
<dbReference type="EMBL" id="AL772359">
    <property type="protein sequence ID" value="CAM20294.1"/>
    <property type="status" value="ALT_INIT"/>
    <property type="molecule type" value="Genomic_DNA"/>
</dbReference>
<dbReference type="EMBL" id="AL672004">
    <property type="protein sequence ID" value="CAM20294.1"/>
    <property type="status" value="JOINED"/>
    <property type="molecule type" value="Genomic_DNA"/>
</dbReference>
<dbReference type="EMBL" id="AL672049">
    <property type="protein sequence ID" value="CAM20294.1"/>
    <property type="status" value="JOINED"/>
    <property type="molecule type" value="Genomic_DNA"/>
</dbReference>
<dbReference type="EMBL" id="AL928722">
    <property type="protein sequence ID" value="CAM20294.1"/>
    <property type="status" value="JOINED"/>
    <property type="molecule type" value="Genomic_DNA"/>
</dbReference>
<dbReference type="EMBL" id="AL928722">
    <property type="protein sequence ID" value="CAO77877.1"/>
    <property type="molecule type" value="Genomic_DNA"/>
</dbReference>
<dbReference type="EMBL" id="AL672004">
    <property type="protein sequence ID" value="CAO77877.1"/>
    <property type="status" value="JOINED"/>
    <property type="molecule type" value="Genomic_DNA"/>
</dbReference>
<dbReference type="EMBL" id="AL672049">
    <property type="protein sequence ID" value="CAO77877.1"/>
    <property type="status" value="JOINED"/>
    <property type="molecule type" value="Genomic_DNA"/>
</dbReference>
<dbReference type="EMBL" id="AL772359">
    <property type="protein sequence ID" value="CAO77877.1"/>
    <property type="status" value="JOINED"/>
    <property type="molecule type" value="Genomic_DNA"/>
</dbReference>
<dbReference type="EMBL" id="AK033182">
    <property type="protein sequence ID" value="BAC28186.1"/>
    <property type="molecule type" value="mRNA"/>
</dbReference>
<dbReference type="EMBL" id="AK143407">
    <property type="protein sequence ID" value="BAE25365.1"/>
    <property type="molecule type" value="mRNA"/>
</dbReference>
<dbReference type="EMBL" id="AK148805">
    <property type="protein sequence ID" value="BAE28668.1"/>
    <property type="molecule type" value="mRNA"/>
</dbReference>
<dbReference type="EMBL" id="AK129165">
    <property type="protein sequence ID" value="BAC97975.1"/>
    <property type="molecule type" value="mRNA"/>
</dbReference>
<dbReference type="EMBL" id="BC055938">
    <property type="protein sequence ID" value="AAH55938.1"/>
    <property type="status" value="ALT_SEQ"/>
    <property type="molecule type" value="mRNA"/>
</dbReference>
<dbReference type="EMBL" id="BC063062">
    <property type="protein sequence ID" value="AAH63062.1"/>
    <property type="molecule type" value="mRNA"/>
</dbReference>
<dbReference type="CCDS" id="CCDS56763.1">
    <molecule id="Q6ZQ93-1"/>
</dbReference>
<dbReference type="RefSeq" id="NP_001177330.2">
    <molecule id="Q6ZQ93-1"/>
    <property type="nucleotide sequence ID" value="NM_001190401.2"/>
</dbReference>
<dbReference type="SMR" id="Q6ZQ93"/>
<dbReference type="BioGRID" id="201621">
    <property type="interactions" value="4"/>
</dbReference>
<dbReference type="FunCoup" id="Q6ZQ93">
    <property type="interactions" value="5531"/>
</dbReference>
<dbReference type="STRING" id="10090.ENSMUSP00000137430"/>
<dbReference type="MEROPS" id="C19.067"/>
<dbReference type="GlyGen" id="Q6ZQ93">
    <property type="glycosylation" value="3 sites, 2 N-linked glycans (2 sites), 1 O-linked glycan (1 site)"/>
</dbReference>
<dbReference type="iPTMnet" id="Q6ZQ93"/>
<dbReference type="PhosphoSitePlus" id="Q6ZQ93"/>
<dbReference type="jPOST" id="Q6ZQ93"/>
<dbReference type="PaxDb" id="10090-ENSMUSP00000120747"/>
<dbReference type="PeptideAtlas" id="Q6ZQ93"/>
<dbReference type="ProteomicsDB" id="298417">
    <molecule id="Q6ZQ93-1"/>
</dbReference>
<dbReference type="ProteomicsDB" id="298418">
    <molecule id="Q6ZQ93-2"/>
</dbReference>
<dbReference type="ProteomicsDB" id="298419">
    <molecule id="Q6ZQ93-3"/>
</dbReference>
<dbReference type="ProteomicsDB" id="298420">
    <molecule id="Q6ZQ93-4"/>
</dbReference>
<dbReference type="Pumba" id="Q6ZQ93"/>
<dbReference type="Antibodypedia" id="7689">
    <property type="antibodies" value="101 antibodies from 23 providers"/>
</dbReference>
<dbReference type="Ensembl" id="ENSMUST00000180046.8">
    <molecule id="Q6ZQ93-1"/>
    <property type="protein sequence ID" value="ENSMUSP00000137430.2"/>
    <property type="gene ID" value="ENSMUSG00000056342.17"/>
</dbReference>
<dbReference type="GeneID" id="17847"/>
<dbReference type="KEGG" id="mmu:17847"/>
<dbReference type="UCSC" id="uc029rkw.1">
    <molecule id="Q6ZQ93-1"/>
    <property type="organism name" value="mouse"/>
</dbReference>
<dbReference type="AGR" id="MGI:109473"/>
<dbReference type="CTD" id="9736"/>
<dbReference type="MGI" id="MGI:109473">
    <property type="gene designation" value="Usp34"/>
</dbReference>
<dbReference type="VEuPathDB" id="HostDB:ENSMUSG00000056342"/>
<dbReference type="eggNOG" id="KOG1866">
    <property type="taxonomic scope" value="Eukaryota"/>
</dbReference>
<dbReference type="GeneTree" id="ENSGT00940000158659"/>
<dbReference type="HOGENOM" id="CLU_000109_0_0_1"/>
<dbReference type="InParanoid" id="Q6ZQ93"/>
<dbReference type="OMA" id="KLMYSLY"/>
<dbReference type="PhylomeDB" id="Q6ZQ93"/>
<dbReference type="Reactome" id="R-MMU-201681">
    <property type="pathway name" value="TCF dependent signaling in response to WNT"/>
</dbReference>
<dbReference type="Reactome" id="R-MMU-5689880">
    <property type="pathway name" value="Ub-specific processing proteases"/>
</dbReference>
<dbReference type="BioGRID-ORCS" id="17847">
    <property type="hits" value="8 hits in 78 CRISPR screens"/>
</dbReference>
<dbReference type="ChiTaRS" id="Usp34">
    <property type="organism name" value="mouse"/>
</dbReference>
<dbReference type="PRO" id="PR:Q6ZQ93"/>
<dbReference type="Proteomes" id="UP000000589">
    <property type="component" value="Chromosome 11"/>
</dbReference>
<dbReference type="RNAct" id="Q6ZQ93">
    <property type="molecule type" value="protein"/>
</dbReference>
<dbReference type="Bgee" id="ENSMUSG00000056342">
    <property type="expression patterns" value="Expressed in superior cervical ganglion and 259 other cell types or tissues"/>
</dbReference>
<dbReference type="ExpressionAtlas" id="Q6ZQ93">
    <property type="expression patterns" value="baseline and differential"/>
</dbReference>
<dbReference type="GO" id="GO:0004843">
    <property type="term" value="F:cysteine-type deubiquitinase activity"/>
    <property type="evidence" value="ECO:0000250"/>
    <property type="project" value="UniProtKB"/>
</dbReference>
<dbReference type="GO" id="GO:0004197">
    <property type="term" value="F:cysteine-type endopeptidase activity"/>
    <property type="evidence" value="ECO:0000250"/>
    <property type="project" value="UniProtKB"/>
</dbReference>
<dbReference type="GO" id="GO:0090263">
    <property type="term" value="P:positive regulation of canonical Wnt signaling pathway"/>
    <property type="evidence" value="ECO:0000250"/>
    <property type="project" value="UniProtKB"/>
</dbReference>
<dbReference type="GO" id="GO:0071108">
    <property type="term" value="P:protein K48-linked deubiquitination"/>
    <property type="evidence" value="ECO:0000250"/>
    <property type="project" value="UniProtKB"/>
</dbReference>
<dbReference type="GO" id="GO:0006508">
    <property type="term" value="P:proteolysis"/>
    <property type="evidence" value="ECO:0007669"/>
    <property type="project" value="UniProtKB-KW"/>
</dbReference>
<dbReference type="GO" id="GO:0016055">
    <property type="term" value="P:Wnt signaling pathway"/>
    <property type="evidence" value="ECO:0007669"/>
    <property type="project" value="UniProtKB-KW"/>
</dbReference>
<dbReference type="CDD" id="cd02659">
    <property type="entry name" value="peptidase_C19C"/>
    <property type="match status" value="1"/>
</dbReference>
<dbReference type="FunFam" id="3.90.70.10:FF:000014">
    <property type="entry name" value="Ubiquitin carboxyl-terminal hydrolase 34"/>
    <property type="match status" value="1"/>
</dbReference>
<dbReference type="Gene3D" id="3.90.70.10">
    <property type="entry name" value="Cysteine proteinases"/>
    <property type="match status" value="1"/>
</dbReference>
<dbReference type="InterPro" id="IPR016024">
    <property type="entry name" value="ARM-type_fold"/>
</dbReference>
<dbReference type="InterPro" id="IPR056850">
    <property type="entry name" value="ARM_UBP34_24_USP9X_Y"/>
</dbReference>
<dbReference type="InterPro" id="IPR021905">
    <property type="entry name" value="DUF3517"/>
</dbReference>
<dbReference type="InterPro" id="IPR038765">
    <property type="entry name" value="Papain-like_cys_pep_sf"/>
</dbReference>
<dbReference type="InterPro" id="IPR050164">
    <property type="entry name" value="Peptidase_C19"/>
</dbReference>
<dbReference type="InterPro" id="IPR001394">
    <property type="entry name" value="Peptidase_C19_UCH"/>
</dbReference>
<dbReference type="InterPro" id="IPR018200">
    <property type="entry name" value="USP_CS"/>
</dbReference>
<dbReference type="InterPro" id="IPR028889">
    <property type="entry name" value="USP_dom"/>
</dbReference>
<dbReference type="PANTHER" id="PTHR24006">
    <property type="entry name" value="UBIQUITIN CARBOXYL-TERMINAL HYDROLASE"/>
    <property type="match status" value="1"/>
</dbReference>
<dbReference type="PANTHER" id="PTHR24006:SF827">
    <property type="entry name" value="UBIQUITIN CARBOXYL-TERMINAL HYDROLASE 34"/>
    <property type="match status" value="1"/>
</dbReference>
<dbReference type="Pfam" id="PF25010">
    <property type="entry name" value="ARM_UBP24_USP9X-Y"/>
    <property type="match status" value="2"/>
</dbReference>
<dbReference type="Pfam" id="PF12030">
    <property type="entry name" value="DUF3517"/>
    <property type="match status" value="1"/>
</dbReference>
<dbReference type="Pfam" id="PF00443">
    <property type="entry name" value="UCH"/>
    <property type="match status" value="1"/>
</dbReference>
<dbReference type="SUPFAM" id="SSF48371">
    <property type="entry name" value="ARM repeat"/>
    <property type="match status" value="1"/>
</dbReference>
<dbReference type="SUPFAM" id="SSF54001">
    <property type="entry name" value="Cysteine proteinases"/>
    <property type="match status" value="1"/>
</dbReference>
<dbReference type="PROSITE" id="PS00972">
    <property type="entry name" value="USP_1"/>
    <property type="match status" value="1"/>
</dbReference>
<dbReference type="PROSITE" id="PS00973">
    <property type="entry name" value="USP_2"/>
    <property type="match status" value="1"/>
</dbReference>
<dbReference type="PROSITE" id="PS50235">
    <property type="entry name" value="USP_3"/>
    <property type="match status" value="1"/>
</dbReference>
<name>UBP34_MOUSE</name>
<proteinExistence type="evidence at protein level"/>
<comment type="function">
    <text evidence="1">Ubiquitin hydrolase that can remove conjugated ubiquitin from AXIN1 and AXIN2, thereby acting as a regulator of Wnt signaling pathway. Acts as an activator of the Wnt signaling pathway downstream of the beta-catenin destruction complex by deubiquitinating and stabilizing AXIN1 and AXIN2, leading to promote nuclear accumulation of AXIN1 and AXIN2 and positively regulate beta-catenin (CTNBB1)-mediated transcription. Recognizes and hydrolyzes the peptide bond at the C-terminal Gly of ubiquitin. Involved in the processing of poly-ubiquitin precursors as well as that of ubiquitinated proteins.</text>
</comment>
<comment type="catalytic activity">
    <reaction evidence="1">
        <text>Thiol-dependent hydrolysis of ester, thioester, amide, peptide and isopeptide bonds formed by the C-terminal Gly of ubiquitin (a 76-residue protein attached to proteins as an intracellular targeting signal).</text>
        <dbReference type="EC" id="3.4.19.12"/>
    </reaction>
</comment>
<comment type="subunit">
    <text evidence="1">Interacts with AXIN1 and AXIN2.</text>
</comment>
<comment type="alternative products">
    <event type="alternative splicing"/>
    <isoform>
        <id>Q6ZQ93-1</id>
        <name>1</name>
        <sequence type="displayed"/>
    </isoform>
    <isoform>
        <id>Q6ZQ93-2</id>
        <name>2</name>
        <sequence type="described" ref="VSP_035641 VSP_035642"/>
    </isoform>
    <isoform>
        <id>Q6ZQ93-3</id>
        <name>3</name>
        <sequence type="described" ref="VSP_035641 VSP_035642 VSP_020465"/>
    </isoform>
    <isoform>
        <id>Q6ZQ93-4</id>
        <name>4</name>
        <sequence type="described" ref="VSP_035641 VSP_035642 VSP_020464"/>
    </isoform>
</comment>
<comment type="similarity">
    <text evidence="7">Belongs to the peptidase C19 family.</text>
</comment>
<comment type="sequence caution" evidence="7">
    <conflict type="miscellaneous discrepancy">
        <sequence resource="EMBL-CDS" id="AAH55938"/>
    </conflict>
    <text>Contaminating sequence. Potential poly-A sequence.</text>
</comment>
<comment type="sequence caution" evidence="7">
    <conflict type="erroneous initiation">
        <sequence resource="EMBL-CDS" id="CAM20294"/>
    </conflict>
</comment>